<dbReference type="EC" id="2.7.7.6" evidence="1"/>
<dbReference type="EMBL" id="AE002160">
    <property type="protein sequence ID" value="AAF39421.1"/>
    <property type="molecule type" value="Genomic_DNA"/>
</dbReference>
<dbReference type="PIR" id="G81686">
    <property type="entry name" value="G81686"/>
</dbReference>
<dbReference type="RefSeq" id="WP_010230915.1">
    <property type="nucleotide sequence ID" value="NC_002620.2"/>
</dbReference>
<dbReference type="SMR" id="P56869"/>
<dbReference type="GeneID" id="1245948"/>
<dbReference type="KEGG" id="cmu:TC_0589"/>
<dbReference type="eggNOG" id="COG0085">
    <property type="taxonomic scope" value="Bacteria"/>
</dbReference>
<dbReference type="HOGENOM" id="CLU_000524_4_1_0"/>
<dbReference type="OrthoDB" id="9803954at2"/>
<dbReference type="Proteomes" id="UP000000800">
    <property type="component" value="Chromosome"/>
</dbReference>
<dbReference type="GO" id="GO:0000428">
    <property type="term" value="C:DNA-directed RNA polymerase complex"/>
    <property type="evidence" value="ECO:0007669"/>
    <property type="project" value="UniProtKB-KW"/>
</dbReference>
<dbReference type="GO" id="GO:0003677">
    <property type="term" value="F:DNA binding"/>
    <property type="evidence" value="ECO:0007669"/>
    <property type="project" value="UniProtKB-UniRule"/>
</dbReference>
<dbReference type="GO" id="GO:0003899">
    <property type="term" value="F:DNA-directed RNA polymerase activity"/>
    <property type="evidence" value="ECO:0007669"/>
    <property type="project" value="UniProtKB-UniRule"/>
</dbReference>
<dbReference type="GO" id="GO:0032549">
    <property type="term" value="F:ribonucleoside binding"/>
    <property type="evidence" value="ECO:0007669"/>
    <property type="project" value="InterPro"/>
</dbReference>
<dbReference type="GO" id="GO:0006351">
    <property type="term" value="P:DNA-templated transcription"/>
    <property type="evidence" value="ECO:0007669"/>
    <property type="project" value="UniProtKB-UniRule"/>
</dbReference>
<dbReference type="CDD" id="cd00653">
    <property type="entry name" value="RNA_pol_B_RPB2"/>
    <property type="match status" value="1"/>
</dbReference>
<dbReference type="FunFam" id="3.90.1800.10:FF:000001">
    <property type="entry name" value="DNA-directed RNA polymerase subunit beta"/>
    <property type="match status" value="1"/>
</dbReference>
<dbReference type="Gene3D" id="2.40.50.100">
    <property type="match status" value="1"/>
</dbReference>
<dbReference type="Gene3D" id="2.40.50.150">
    <property type="match status" value="1"/>
</dbReference>
<dbReference type="Gene3D" id="3.90.1100.10">
    <property type="match status" value="1"/>
</dbReference>
<dbReference type="Gene3D" id="2.30.150.10">
    <property type="entry name" value="DNA-directed RNA polymerase, beta subunit, external 1 domain"/>
    <property type="match status" value="1"/>
</dbReference>
<dbReference type="Gene3D" id="2.40.270.10">
    <property type="entry name" value="DNA-directed RNA polymerase, subunit 2, domain 6"/>
    <property type="match status" value="2"/>
</dbReference>
<dbReference type="Gene3D" id="3.90.1800.10">
    <property type="entry name" value="RNA polymerase alpha subunit dimerisation domain"/>
    <property type="match status" value="1"/>
</dbReference>
<dbReference type="Gene3D" id="3.90.1110.10">
    <property type="entry name" value="RNA polymerase Rpb2, domain 2"/>
    <property type="match status" value="1"/>
</dbReference>
<dbReference type="HAMAP" id="MF_01321">
    <property type="entry name" value="RNApol_bact_RpoB"/>
    <property type="match status" value="1"/>
</dbReference>
<dbReference type="InterPro" id="IPR042107">
    <property type="entry name" value="DNA-dir_RNA_pol_bsu_ext_1_sf"/>
</dbReference>
<dbReference type="InterPro" id="IPR019462">
    <property type="entry name" value="DNA-dir_RNA_pol_bsu_external_1"/>
</dbReference>
<dbReference type="InterPro" id="IPR015712">
    <property type="entry name" value="DNA-dir_RNA_pol_su2"/>
</dbReference>
<dbReference type="InterPro" id="IPR007120">
    <property type="entry name" value="DNA-dir_RNAP_su2_dom"/>
</dbReference>
<dbReference type="InterPro" id="IPR037033">
    <property type="entry name" value="DNA-dir_RNAP_su2_hyb_sf"/>
</dbReference>
<dbReference type="InterPro" id="IPR010243">
    <property type="entry name" value="RNA_pol_bsu_bac"/>
</dbReference>
<dbReference type="InterPro" id="IPR007121">
    <property type="entry name" value="RNA_pol_bsu_CS"/>
</dbReference>
<dbReference type="InterPro" id="IPR007644">
    <property type="entry name" value="RNA_pol_bsu_protrusion"/>
</dbReference>
<dbReference type="InterPro" id="IPR007642">
    <property type="entry name" value="RNA_pol_Rpb2_2"/>
</dbReference>
<dbReference type="InterPro" id="IPR037034">
    <property type="entry name" value="RNA_pol_Rpb2_2_sf"/>
</dbReference>
<dbReference type="InterPro" id="IPR007645">
    <property type="entry name" value="RNA_pol_Rpb2_3"/>
</dbReference>
<dbReference type="InterPro" id="IPR007641">
    <property type="entry name" value="RNA_pol_Rpb2_7"/>
</dbReference>
<dbReference type="InterPro" id="IPR014724">
    <property type="entry name" value="RNA_pol_RPB2_OB-fold"/>
</dbReference>
<dbReference type="NCBIfam" id="NF001616">
    <property type="entry name" value="PRK00405.1"/>
    <property type="match status" value="1"/>
</dbReference>
<dbReference type="NCBIfam" id="TIGR02013">
    <property type="entry name" value="rpoB"/>
    <property type="match status" value="1"/>
</dbReference>
<dbReference type="PANTHER" id="PTHR20856">
    <property type="entry name" value="DNA-DIRECTED RNA POLYMERASE I SUBUNIT 2"/>
    <property type="match status" value="1"/>
</dbReference>
<dbReference type="Pfam" id="PF04563">
    <property type="entry name" value="RNA_pol_Rpb2_1"/>
    <property type="match status" value="1"/>
</dbReference>
<dbReference type="Pfam" id="PF04561">
    <property type="entry name" value="RNA_pol_Rpb2_2"/>
    <property type="match status" value="1"/>
</dbReference>
<dbReference type="Pfam" id="PF04565">
    <property type="entry name" value="RNA_pol_Rpb2_3"/>
    <property type="match status" value="1"/>
</dbReference>
<dbReference type="Pfam" id="PF10385">
    <property type="entry name" value="RNA_pol_Rpb2_45"/>
    <property type="match status" value="1"/>
</dbReference>
<dbReference type="Pfam" id="PF00562">
    <property type="entry name" value="RNA_pol_Rpb2_6"/>
    <property type="match status" value="1"/>
</dbReference>
<dbReference type="Pfam" id="PF04560">
    <property type="entry name" value="RNA_pol_Rpb2_7"/>
    <property type="match status" value="1"/>
</dbReference>
<dbReference type="SUPFAM" id="SSF64484">
    <property type="entry name" value="beta and beta-prime subunits of DNA dependent RNA-polymerase"/>
    <property type="match status" value="1"/>
</dbReference>
<dbReference type="PROSITE" id="PS01166">
    <property type="entry name" value="RNA_POL_BETA"/>
    <property type="match status" value="1"/>
</dbReference>
<gene>
    <name evidence="1" type="primary">rpoB</name>
    <name type="ordered locus">TC_0589</name>
</gene>
<protein>
    <recommendedName>
        <fullName evidence="1">DNA-directed RNA polymerase subunit beta</fullName>
        <shortName evidence="1">RNAP subunit beta</shortName>
        <ecNumber evidence="1">2.7.7.6</ecNumber>
    </recommendedName>
    <alternativeName>
        <fullName evidence="1">RNA polymerase subunit beta</fullName>
    </alternativeName>
    <alternativeName>
        <fullName evidence="1">Transcriptase subunit beta</fullName>
    </alternativeName>
</protein>
<sequence length="1252" mass="139965">MFKCPERVSIKKKEDILDLPNLVEVQIKSYKQFLQIGKLAEERENIGLEEVFREIFPIKSYNEATILEYLSYNLGVPKYSPEECIRRGITYSVTLKVRFRLTDETGIKEEEVYMGTIPIMTDKGTFIINGAERVVVSQVHRSPGINFEQEKHSKGNVLFSFRIIPYRGSWLEASFDINDLIYIHIDRKKRRRKILAMTFIRALGYSTDADIIEEFFAVEEHSLRSEKDFVALVGKVLADNVVDADSSLVYGKAGEKLSTAMLKRILDAGVQSLKIAVGADENHPIIKMLAKDPTDSYEAALKDFYRRLRPGEPATLANARSTIMRLFFDSKRYNLGRVGRYKLNKKLGFPLDDETLSQVTLRKEDVIGALKYLIRLRMGDEKTSIDDIDHLANRRVRSVGELIQNHCRSGLARMEKIVRERMNLFDFSSDTLTPGKIISAKGLVSVLKDFFSRSQLSQFMDQTNPVAELTHKRRLSALGPGGLNRERAGFEVRDVHSSHYGRICPIETPEGPNIGLITSLSSFAKINEFGFIETPYRVVRDGIVTDEIEYMTADVEEDCVIAQASAELDEYNMFKDSVCWARYKGEAFEADTSTVTHMDVSPKQLVSVVTGLIPFLEHDDANRALMGSNMQRQAVPLLKTEAAIVGTGLEGRAAKDSGAIVVAQEDGVVEYVDSYEIVVAKKNNPTLKDTYPLKKFLRSNSGTCINQTPLCSVGDVVTHGDVLADGPATDKGELALGKNVLVAFMPWYGYNFEDAIIISEKLIKQDAYTSIYIEEFELTARDTKLGKEEITRDIPNVSEEVLANLGEDGIVRIGAEVKPGDILVGKITPKSETELAPEERLLRAIFGEKAADVKDASLTVPPGTEGVVMDVKVFSRKDRLSKSDDELVEEAVHLKDLQKEYKSQLAQLKMEHREKLGALLLNEKAPAAIIHRRSADILVQEGAVFDQETIELLERESLVDLLMAPCDMYDVLKDILSNYETAVQRLEVNYKTEAEHIKEGDADLDHGVIRQVKVYVASKRKLQVGDKMAGRHGNKGVVSKIVPEADMPFLANGETVQMILNPLGVPSRMNLGQVLETHLGYAAKTAGIYVKTPVFEGFPESRIWDMMIEQGLPEDGKSYLFDGKTGERFDSKVVVGYIYMLKLSHLIADKIHARSIGPYSLVTQQPLGGKAQMGGQRFGEMEVWALEAYGVAHMLQEILTVKSDDVSGRTRIYESIVKGENLLRSGTPESFNVLIKEMQGLGLDVRPMVVDA</sequence>
<accession>P56869</accession>
<proteinExistence type="inferred from homology"/>
<keyword id="KW-0240">DNA-directed RNA polymerase</keyword>
<keyword id="KW-0548">Nucleotidyltransferase</keyword>
<keyword id="KW-0804">Transcription</keyword>
<keyword id="KW-0808">Transferase</keyword>
<evidence type="ECO:0000255" key="1">
    <source>
        <dbReference type="HAMAP-Rule" id="MF_01321"/>
    </source>
</evidence>
<evidence type="ECO:0000305" key="2"/>
<name>RPOB_CHLMU</name>
<organism>
    <name type="scientific">Chlamydia muridarum (strain MoPn / Nigg)</name>
    <dbReference type="NCBI Taxonomy" id="243161"/>
    <lineage>
        <taxon>Bacteria</taxon>
        <taxon>Pseudomonadati</taxon>
        <taxon>Chlamydiota</taxon>
        <taxon>Chlamydiia</taxon>
        <taxon>Chlamydiales</taxon>
        <taxon>Chlamydiaceae</taxon>
        <taxon>Chlamydia/Chlamydophila group</taxon>
        <taxon>Chlamydia</taxon>
    </lineage>
</organism>
<comment type="function">
    <text evidence="1">DNA-dependent RNA polymerase catalyzes the transcription of DNA into RNA using the four ribonucleoside triphosphates as substrates.</text>
</comment>
<comment type="catalytic activity">
    <reaction evidence="1">
        <text>RNA(n) + a ribonucleoside 5'-triphosphate = RNA(n+1) + diphosphate</text>
        <dbReference type="Rhea" id="RHEA:21248"/>
        <dbReference type="Rhea" id="RHEA-COMP:14527"/>
        <dbReference type="Rhea" id="RHEA-COMP:17342"/>
        <dbReference type="ChEBI" id="CHEBI:33019"/>
        <dbReference type="ChEBI" id="CHEBI:61557"/>
        <dbReference type="ChEBI" id="CHEBI:140395"/>
        <dbReference type="EC" id="2.7.7.6"/>
    </reaction>
</comment>
<comment type="subunit">
    <text evidence="1">The RNAP catalytic core consists of 2 alpha, 1 beta, 1 beta' and 1 omega subunit. When a sigma factor is associated with the core the holoenzyme is formed, which can initiate transcription.</text>
</comment>
<comment type="similarity">
    <text evidence="1">Belongs to the RNA polymerase beta chain family.</text>
</comment>
<reference key="1">
    <citation type="journal article" date="2000" name="Nucleic Acids Res.">
        <title>Genome sequences of Chlamydia trachomatis MoPn and Chlamydia pneumoniae AR39.</title>
        <authorList>
            <person name="Read T.D."/>
            <person name="Brunham R.C."/>
            <person name="Shen C."/>
            <person name="Gill S.R."/>
            <person name="Heidelberg J.F."/>
            <person name="White O."/>
            <person name="Hickey E.K."/>
            <person name="Peterson J.D."/>
            <person name="Utterback T.R."/>
            <person name="Berry K.J."/>
            <person name="Bass S."/>
            <person name="Linher K.D."/>
            <person name="Weidman J.F."/>
            <person name="Khouri H.M."/>
            <person name="Craven B."/>
            <person name="Bowman C."/>
            <person name="Dodson R.J."/>
            <person name="Gwinn M.L."/>
            <person name="Nelson W.C."/>
            <person name="DeBoy R.T."/>
            <person name="Kolonay J.F."/>
            <person name="McClarty G."/>
            <person name="Salzberg S.L."/>
            <person name="Eisen J.A."/>
            <person name="Fraser C.M."/>
        </authorList>
    </citation>
    <scope>NUCLEOTIDE SEQUENCE [LARGE SCALE GENOMIC DNA]</scope>
    <source>
        <strain>MoPn / Nigg</strain>
    </source>
</reference>
<reference key="2">
    <citation type="journal article" date="1990" name="J. Bacteriol.">
        <title>Cloning and characterization of RNA polymerase core subunits of Chlamydia trachomatis by using the polymerase chain reaction.</title>
        <authorList>
            <person name="Engel J.N."/>
            <person name="Pollack J."/>
            <person name="Malik F."/>
            <person name="Ganem D."/>
        </authorList>
    </citation>
    <scope>NUCLEOTIDE SEQUENCE [GENOMIC DNA] OF 385-754</scope>
    <source>
        <strain>MoPn</strain>
    </source>
</reference>
<feature type="chain" id="PRO_0000047879" description="DNA-directed RNA polymerase subunit beta">
    <location>
        <begin position="1"/>
        <end position="1252"/>
    </location>
</feature>
<feature type="sequence conflict" description="In Ref. 2." evidence="2" ref="2">
    <original>C</original>
    <variation>S</variation>
    <location>
        <position position="407"/>
    </location>
</feature>
<feature type="sequence conflict" description="In Ref. 2." evidence="2" ref="2">
    <original>NIGLITSLSSFAKINEFGFIETPYRVVRDGIVTDEIEYMTADVEEDCVIAQASAELDEYNMFKDSVCWARYKGEAFEADT</original>
    <variation>KLTDQ</variation>
    <location>
        <begin position="513"/>
        <end position="592"/>
    </location>
</feature>
<feature type="sequence conflict" description="In Ref. 2." evidence="2" ref="2">
    <original>CINQTPLCSVGDVVT</original>
    <variation>M</variation>
    <location>
        <begin position="704"/>
        <end position="718"/>
    </location>
</feature>
<feature type="sequence conflict" description="In Ref. 2." evidence="2" ref="2">
    <original>W</original>
    <variation>Q</variation>
    <location>
        <position position="747"/>
    </location>
</feature>